<evidence type="ECO:0000255" key="1">
    <source>
        <dbReference type="HAMAP-Rule" id="MF_01011"/>
    </source>
</evidence>
<dbReference type="EC" id="2.1.1.-" evidence="1"/>
<dbReference type="EC" id="2.1.1.35" evidence="1"/>
<dbReference type="EMBL" id="CP000720">
    <property type="protein sequence ID" value="ABS47458.1"/>
    <property type="molecule type" value="Genomic_DNA"/>
</dbReference>
<dbReference type="RefSeq" id="WP_002209474.1">
    <property type="nucleotide sequence ID" value="NC_009708.1"/>
</dbReference>
<dbReference type="SMR" id="A7FD13"/>
<dbReference type="GeneID" id="57974789"/>
<dbReference type="KEGG" id="ypi:YpsIP31758_0141"/>
<dbReference type="HOGENOM" id="CLU_043022_0_0_6"/>
<dbReference type="Proteomes" id="UP000002412">
    <property type="component" value="Chromosome"/>
</dbReference>
<dbReference type="GO" id="GO:0005829">
    <property type="term" value="C:cytosol"/>
    <property type="evidence" value="ECO:0007669"/>
    <property type="project" value="TreeGrafter"/>
</dbReference>
<dbReference type="GO" id="GO:0019843">
    <property type="term" value="F:rRNA binding"/>
    <property type="evidence" value="ECO:0007669"/>
    <property type="project" value="TreeGrafter"/>
</dbReference>
<dbReference type="GO" id="GO:0030697">
    <property type="term" value="F:tRNA (uracil(54)-C5)-methyltransferase activity, S-adenosyl methionine-dependent"/>
    <property type="evidence" value="ECO:0007669"/>
    <property type="project" value="UniProtKB-UniRule"/>
</dbReference>
<dbReference type="GO" id="GO:0000049">
    <property type="term" value="F:tRNA binding"/>
    <property type="evidence" value="ECO:0007669"/>
    <property type="project" value="TreeGrafter"/>
</dbReference>
<dbReference type="GO" id="GO:0030488">
    <property type="term" value="P:tRNA methylation"/>
    <property type="evidence" value="ECO:0007669"/>
    <property type="project" value="UniProtKB-UniRule"/>
</dbReference>
<dbReference type="CDD" id="cd02440">
    <property type="entry name" value="AdoMet_MTases"/>
    <property type="match status" value="1"/>
</dbReference>
<dbReference type="FunFam" id="2.40.50.1070:FF:000001">
    <property type="entry name" value="tRNA/tmRNA (uracil-C(5))-methyltransferase"/>
    <property type="match status" value="1"/>
</dbReference>
<dbReference type="FunFam" id="3.40.50.150:FF:000012">
    <property type="entry name" value="tRNA/tmRNA (uracil-C(5))-methyltransferase"/>
    <property type="match status" value="1"/>
</dbReference>
<dbReference type="Gene3D" id="2.40.50.1070">
    <property type="match status" value="1"/>
</dbReference>
<dbReference type="Gene3D" id="3.40.50.150">
    <property type="entry name" value="Vaccinia Virus protein VP39"/>
    <property type="match status" value="1"/>
</dbReference>
<dbReference type="HAMAP" id="MF_01011">
    <property type="entry name" value="RNA_methyltr_TrmA"/>
    <property type="match status" value="1"/>
</dbReference>
<dbReference type="InterPro" id="IPR030390">
    <property type="entry name" value="MeTrfase_TrmA_AS"/>
</dbReference>
<dbReference type="InterPro" id="IPR030391">
    <property type="entry name" value="MeTrfase_TrmA_CS"/>
</dbReference>
<dbReference type="InterPro" id="IPR029063">
    <property type="entry name" value="SAM-dependent_MTases_sf"/>
</dbReference>
<dbReference type="InterPro" id="IPR011869">
    <property type="entry name" value="TrmA_MeTrfase"/>
</dbReference>
<dbReference type="InterPro" id="IPR010280">
    <property type="entry name" value="U5_MeTrfase_fam"/>
</dbReference>
<dbReference type="NCBIfam" id="TIGR02143">
    <property type="entry name" value="trmA_only"/>
    <property type="match status" value="1"/>
</dbReference>
<dbReference type="PANTHER" id="PTHR47790">
    <property type="entry name" value="TRNA/TMRNA (URACIL-C(5))-METHYLTRANSFERASE"/>
    <property type="match status" value="1"/>
</dbReference>
<dbReference type="PANTHER" id="PTHR47790:SF2">
    <property type="entry name" value="TRNA_TMRNA (URACIL-C(5))-METHYLTRANSFERASE"/>
    <property type="match status" value="1"/>
</dbReference>
<dbReference type="Pfam" id="PF05958">
    <property type="entry name" value="tRNA_U5-meth_tr"/>
    <property type="match status" value="1"/>
</dbReference>
<dbReference type="SUPFAM" id="SSF53335">
    <property type="entry name" value="S-adenosyl-L-methionine-dependent methyltransferases"/>
    <property type="match status" value="1"/>
</dbReference>
<dbReference type="PROSITE" id="PS51687">
    <property type="entry name" value="SAM_MT_RNA_M5U"/>
    <property type="match status" value="1"/>
</dbReference>
<dbReference type="PROSITE" id="PS01230">
    <property type="entry name" value="TRMA_1"/>
    <property type="match status" value="1"/>
</dbReference>
<dbReference type="PROSITE" id="PS01231">
    <property type="entry name" value="TRMA_2"/>
    <property type="match status" value="1"/>
</dbReference>
<sequence length="367" mass="42413">MTPNILPIESYDHQLAEKSARLKAMMLPFQAPEPEIFRSPADHYRMRAEFRVWHDEDDLYHIMFDQQTKQRIRVEQFPVASRLINRLMDALMTAIRAEPLLRRKLFQIDYLSTLSGKLIASLLYHRQLDEEWQQKALELRDQLRAQGFDLQLIGRAAKTKIMLDHDYIDEVLPVAGREMIYRQVENSFTQPNAAVNIHMLEWALDVTQGATGDLLELYCGNGNFSLALARNFERVLATEIAKPSVAAAQYNIAANNIDNVQIIRMSAEEFTQAMQGVREFNRLKGIDLGSYNCETIFVDPPRSGLDHETVKLVQAYPRILYISCNPETLCANLEQLQHTHKISRLALFDQFPYTHHMECGVLLEKRH</sequence>
<name>TRMA_YERP3</name>
<organism>
    <name type="scientific">Yersinia pseudotuberculosis serotype O:1b (strain IP 31758)</name>
    <dbReference type="NCBI Taxonomy" id="349747"/>
    <lineage>
        <taxon>Bacteria</taxon>
        <taxon>Pseudomonadati</taxon>
        <taxon>Pseudomonadota</taxon>
        <taxon>Gammaproteobacteria</taxon>
        <taxon>Enterobacterales</taxon>
        <taxon>Yersiniaceae</taxon>
        <taxon>Yersinia</taxon>
    </lineage>
</organism>
<accession>A7FD13</accession>
<protein>
    <recommendedName>
        <fullName evidence="1">tRNA/tmRNA (uracil-C(5))-methyltransferase</fullName>
        <ecNumber evidence="1">2.1.1.-</ecNumber>
        <ecNumber evidence="1">2.1.1.35</ecNumber>
    </recommendedName>
    <alternativeName>
        <fullName evidence="1">tRNA (uracil(54)-C(5))-methyltransferase</fullName>
    </alternativeName>
    <alternativeName>
        <fullName evidence="1">tRNA(m5U54)-methyltransferase</fullName>
        <shortName evidence="1">RUMT</shortName>
    </alternativeName>
    <alternativeName>
        <fullName evidence="1">tmRNA (uracil(341)-C(5))-methyltransferase</fullName>
    </alternativeName>
</protein>
<keyword id="KW-0489">Methyltransferase</keyword>
<keyword id="KW-0949">S-adenosyl-L-methionine</keyword>
<keyword id="KW-0808">Transferase</keyword>
<keyword id="KW-0819">tRNA processing</keyword>
<gene>
    <name evidence="1" type="primary">trmA</name>
    <name type="ordered locus">YpsIP31758_0141</name>
</gene>
<reference key="1">
    <citation type="journal article" date="2007" name="PLoS Genet.">
        <title>The complete genome sequence of Yersinia pseudotuberculosis IP31758, the causative agent of Far East scarlet-like fever.</title>
        <authorList>
            <person name="Eppinger M."/>
            <person name="Rosovitz M.J."/>
            <person name="Fricke W.F."/>
            <person name="Rasko D.A."/>
            <person name="Kokorina G."/>
            <person name="Fayolle C."/>
            <person name="Lindler L.E."/>
            <person name="Carniel E."/>
            <person name="Ravel J."/>
        </authorList>
    </citation>
    <scope>NUCLEOTIDE SEQUENCE [LARGE SCALE GENOMIC DNA]</scope>
    <source>
        <strain>IP 31758</strain>
    </source>
</reference>
<proteinExistence type="inferred from homology"/>
<comment type="function">
    <text evidence="1">Dual-specificity methyltransferase that catalyzes the formation of 5-methyluridine at position 54 (m5U54) in all tRNAs, and that of position 341 (m5U341) in tmRNA (transfer-mRNA).</text>
</comment>
<comment type="catalytic activity">
    <reaction evidence="1">
        <text>uridine(54) in tRNA + S-adenosyl-L-methionine = 5-methyluridine(54) in tRNA + S-adenosyl-L-homocysteine + H(+)</text>
        <dbReference type="Rhea" id="RHEA:42712"/>
        <dbReference type="Rhea" id="RHEA-COMP:10167"/>
        <dbReference type="Rhea" id="RHEA-COMP:10193"/>
        <dbReference type="ChEBI" id="CHEBI:15378"/>
        <dbReference type="ChEBI" id="CHEBI:57856"/>
        <dbReference type="ChEBI" id="CHEBI:59789"/>
        <dbReference type="ChEBI" id="CHEBI:65315"/>
        <dbReference type="ChEBI" id="CHEBI:74447"/>
        <dbReference type="EC" id="2.1.1.35"/>
    </reaction>
</comment>
<comment type="catalytic activity">
    <reaction evidence="1">
        <text>uridine(341) in tmRNA + S-adenosyl-L-methionine = 5-methyluridine(341) in tmRNA + S-adenosyl-L-homocysteine + H(+)</text>
        <dbReference type="Rhea" id="RHEA:43612"/>
        <dbReference type="Rhea" id="RHEA-COMP:10630"/>
        <dbReference type="Rhea" id="RHEA-COMP:10631"/>
        <dbReference type="ChEBI" id="CHEBI:15378"/>
        <dbReference type="ChEBI" id="CHEBI:57856"/>
        <dbReference type="ChEBI" id="CHEBI:59789"/>
        <dbReference type="ChEBI" id="CHEBI:65315"/>
        <dbReference type="ChEBI" id="CHEBI:74447"/>
    </reaction>
</comment>
<comment type="similarity">
    <text evidence="1">Belongs to the class I-like SAM-binding methyltransferase superfamily. RNA M5U methyltransferase family. TrmA subfamily.</text>
</comment>
<feature type="chain" id="PRO_1000072917" description="tRNA/tmRNA (uracil-C(5))-methyltransferase">
    <location>
        <begin position="1"/>
        <end position="367"/>
    </location>
</feature>
<feature type="active site" description="Nucleophile" evidence="1">
    <location>
        <position position="324"/>
    </location>
</feature>
<feature type="active site" description="Proton acceptor" evidence="1">
    <location>
        <position position="358"/>
    </location>
</feature>
<feature type="binding site" evidence="1">
    <location>
        <position position="190"/>
    </location>
    <ligand>
        <name>S-adenosyl-L-methionine</name>
        <dbReference type="ChEBI" id="CHEBI:59789"/>
    </ligand>
</feature>
<feature type="binding site" evidence="1">
    <location>
        <position position="218"/>
    </location>
    <ligand>
        <name>S-adenosyl-L-methionine</name>
        <dbReference type="ChEBI" id="CHEBI:59789"/>
    </ligand>
</feature>
<feature type="binding site" evidence="1">
    <location>
        <position position="223"/>
    </location>
    <ligand>
        <name>S-adenosyl-L-methionine</name>
        <dbReference type="ChEBI" id="CHEBI:59789"/>
    </ligand>
</feature>
<feature type="binding site" evidence="1">
    <location>
        <position position="239"/>
    </location>
    <ligand>
        <name>S-adenosyl-L-methionine</name>
        <dbReference type="ChEBI" id="CHEBI:59789"/>
    </ligand>
</feature>
<feature type="binding site" evidence="1">
    <location>
        <position position="299"/>
    </location>
    <ligand>
        <name>S-adenosyl-L-methionine</name>
        <dbReference type="ChEBI" id="CHEBI:59789"/>
    </ligand>
</feature>